<feature type="transit peptide" description="Chloroplast" evidence="10">
    <location>
        <begin position="1"/>
        <end position="67"/>
    </location>
</feature>
<feature type="chain" id="PRO_0000007144" description="Palmitoyl-monogalactosyldiacylglycerol delta-7 desaturase, chloroplastic">
    <location>
        <begin position="68"/>
        <end position="371"/>
    </location>
</feature>
<feature type="transmembrane region" description="Helical" evidence="2">
    <location>
        <begin position="103"/>
        <end position="123"/>
    </location>
</feature>
<feature type="transmembrane region" description="Helical" evidence="2">
    <location>
        <begin position="127"/>
        <end position="147"/>
    </location>
</feature>
<feature type="transmembrane region" description="Helical" evidence="2">
    <location>
        <begin position="251"/>
        <end position="271"/>
    </location>
</feature>
<feature type="short sequence motif" description="Histidine box-1" evidence="10">
    <location>
        <begin position="148"/>
        <end position="153"/>
    </location>
</feature>
<feature type="short sequence motif" description="Histidine box-2" evidence="10">
    <location>
        <begin position="185"/>
        <end position="189"/>
    </location>
</feature>
<feature type="short sequence motif" description="Histidine box-3" evidence="10">
    <location>
        <begin position="317"/>
        <end position="321"/>
    </location>
</feature>
<feature type="sequence conflict" description="In Ref. 5; AAK92773." evidence="10" ref="5">
    <original>S</original>
    <variation>G</variation>
    <location>
        <position position="208"/>
    </location>
</feature>
<feature type="sequence conflict" description="In Ref. 6; AAM63459." evidence="10" ref="6">
    <original>D</original>
    <variation>V</variation>
    <location>
        <position position="231"/>
    </location>
</feature>
<proteinExistence type="evidence at protein level"/>
<sequence>MASLLTKPKPVFLCSPSLSPRTLNTATPSLNFTRISFTHHQKLAPFKPPSLVVAFSEKGLKRDVTTAAAATEGDYRRIMLSDVLVKKKEKVVWWEREWKAMDFGAVAVVLSMHLLSLLAPFQFNWRAVSVAFGLYIVTGLLGITLSFHRNLSHKAFKLPKWLEYLFAYCGAQALQGNPIDWVSTHRYHHQFCDSDRDPHSPLDGFWFSHMNWMFDTNTITQRCGEPNNVGDLEKQPFYRFLRTTYILHPLALAVALYAMGGFPFIVWGMGVRIVWVYHITWLVNSACHVWGKQAWNTGDLSKNNWWVAALAFGEGWHNNHHAFEFSARHGLEWWQLDMTWYVVKFLQAIGLATDVKLPSEAQKQRMAFTSD</sequence>
<evidence type="ECO:0000250" key="1">
    <source>
        <dbReference type="UniProtKB" id="O00767"/>
    </source>
</evidence>
<evidence type="ECO:0000255" key="2"/>
<evidence type="ECO:0000269" key="3">
    <source>
    </source>
</evidence>
<evidence type="ECO:0000269" key="4">
    <source>
    </source>
</evidence>
<evidence type="ECO:0000269" key="5">
    <source>
    </source>
</evidence>
<evidence type="ECO:0000269" key="6">
    <source>
    </source>
</evidence>
<evidence type="ECO:0000303" key="7">
    <source>
    </source>
</evidence>
<evidence type="ECO:0000303" key="8">
    <source>
    </source>
</evidence>
<evidence type="ECO:0000303" key="9">
    <source>
    </source>
</evidence>
<evidence type="ECO:0000305" key="10"/>
<evidence type="ECO:0000305" key="11">
    <source>
    </source>
</evidence>
<evidence type="ECO:0000312" key="12">
    <source>
        <dbReference type="Araport" id="AT3G15850"/>
    </source>
</evidence>
<evidence type="ECO:0000312" key="13">
    <source>
        <dbReference type="EMBL" id="BAB02316.1"/>
    </source>
</evidence>
<gene>
    <name evidence="7" type="primary">ADS3</name>
    <name evidence="8" type="synonym">FAD5</name>
    <name evidence="9" type="synonym">FADB</name>
    <name evidence="12" type="ordered locus">At3g15850</name>
    <name evidence="13" type="ORF">MSJ11.25</name>
</gene>
<keyword id="KW-0150">Chloroplast</keyword>
<keyword id="KW-0275">Fatty acid biosynthesis</keyword>
<keyword id="KW-0276">Fatty acid metabolism</keyword>
<keyword id="KW-0408">Iron</keyword>
<keyword id="KW-0444">Lipid biosynthesis</keyword>
<keyword id="KW-0443">Lipid metabolism</keyword>
<keyword id="KW-0472">Membrane</keyword>
<keyword id="KW-0560">Oxidoreductase</keyword>
<keyword id="KW-0925">Oxylipin biosynthesis</keyword>
<keyword id="KW-0934">Plastid</keyword>
<keyword id="KW-1185">Reference proteome</keyword>
<keyword id="KW-0809">Transit peptide</keyword>
<keyword id="KW-0812">Transmembrane</keyword>
<keyword id="KW-1133">Transmembrane helix</keyword>
<comment type="function">
    <text evidence="3 4 5 6">Fatty acid desaturase involved in the first desaturation step leading to the formation of hexadeca 7,10,13-trienoic acid (16:3(7Z,10Z,13Z)), the major functional components of thylakoid membranes (PubMed:15240892, PubMed:15579662, PubMed:16666902). Required for chloroplast biogenesis at low temperature (PubMed:16668849). Also indirectly involved in the production of the oxylipin dinor-oxo-phyto-dienoic acid implicated in wound signaling (PubMed:15579662).</text>
</comment>
<comment type="catalytic activity">
    <reaction evidence="4">
        <text>a 1-acyl-2-hexadecanoyl-glycerolipid + 2 reduced [2Fe-2S]-[ferredoxin] + O2 + 2 H(+) = a 1-acyl-2-[(7Z)-hexadecenoyl]-glycerolipid + 2 oxidized [2Fe-2S]-[ferredoxin] + 2 H2O</text>
        <dbReference type="Rhea" id="RHEA:46756"/>
        <dbReference type="Rhea" id="RHEA-COMP:10000"/>
        <dbReference type="Rhea" id="RHEA-COMP:10001"/>
        <dbReference type="ChEBI" id="CHEBI:15377"/>
        <dbReference type="ChEBI" id="CHEBI:15378"/>
        <dbReference type="ChEBI" id="CHEBI:15379"/>
        <dbReference type="ChEBI" id="CHEBI:33737"/>
        <dbReference type="ChEBI" id="CHEBI:33738"/>
        <dbReference type="ChEBI" id="CHEBI:86999"/>
        <dbReference type="ChEBI" id="CHEBI:87000"/>
        <dbReference type="EC" id="1.14.19.42"/>
    </reaction>
</comment>
<comment type="cofactor">
    <cofactor evidence="1">
        <name>Fe(2+)</name>
        <dbReference type="ChEBI" id="CHEBI:29033"/>
    </cofactor>
</comment>
<comment type="pathway">
    <text evidence="4">Lipid metabolism; oxylipin biosynthesis.</text>
</comment>
<comment type="pathway">
    <text evidence="4">Lipid metabolism; polyunsaturated fatty acid biosynthesis.</text>
</comment>
<comment type="subcellular location">
    <subcellularLocation>
        <location evidence="11">Plastid</location>
        <location evidence="11">Chloroplast membrane</location>
        <topology evidence="2">Multi-pass membrane protein</topology>
    </subcellularLocation>
</comment>
<comment type="tissue specificity">
    <text evidence="4">Highly expressed in young leaves. Low expression in roots.</text>
</comment>
<comment type="domain">
    <text evidence="1">The histidine box domains are involved in binding the catalytic metal ions.</text>
</comment>
<comment type="miscellaneous">
    <text evidence="3">Substrate specificity shifts from delta-7 to delta-9 desaturation when the protein is retargeted to the cytoplasm.</text>
</comment>
<comment type="similarity">
    <text evidence="10">Belongs to the fatty acid desaturase type 1 family.</text>
</comment>
<protein>
    <recommendedName>
        <fullName evidence="8">Palmitoyl-monogalactosyldiacylglycerol delta-7 desaturase, chloroplastic</fullName>
        <ecNumber evidence="4">1.14.19.42</ecNumber>
    </recommendedName>
    <alternativeName>
        <fullName evidence="7">Acyl-lipid desaturase 3</fullName>
    </alternativeName>
    <alternativeName>
        <fullName evidence="8">Fatty acid desaturase 5</fullName>
        <shortName evidence="8">FAD5</shortName>
    </alternativeName>
    <alternativeName>
        <fullName evidence="9">Fatty acid desaturase B</fullName>
        <shortName evidence="9">FADB</shortName>
    </alternativeName>
    <alternativeName>
        <fullName evidence="8">Monogalactosyldiacylglycerol-specific palmitic acid desaturase</fullName>
    </alternativeName>
</protein>
<organism>
    <name type="scientific">Arabidopsis thaliana</name>
    <name type="common">Mouse-ear cress</name>
    <dbReference type="NCBI Taxonomy" id="3702"/>
    <lineage>
        <taxon>Eukaryota</taxon>
        <taxon>Viridiplantae</taxon>
        <taxon>Streptophyta</taxon>
        <taxon>Embryophyta</taxon>
        <taxon>Tracheophyta</taxon>
        <taxon>Spermatophyta</taxon>
        <taxon>Magnoliopsida</taxon>
        <taxon>eudicotyledons</taxon>
        <taxon>Gunneridae</taxon>
        <taxon>Pentapetalae</taxon>
        <taxon>rosids</taxon>
        <taxon>malvids</taxon>
        <taxon>Brassicales</taxon>
        <taxon>Brassicaceae</taxon>
        <taxon>Camelineae</taxon>
        <taxon>Arabidopsis</taxon>
    </lineage>
</organism>
<reference key="1">
    <citation type="journal article" date="2004" name="Plant Physiol.">
        <title>Identification of the Arabidopsis palmitoyl-monogalactosyldiacylglycerol Delta7-desaturase gene FAD5, and effects of plastidial retargeting of Arabidopsis desaturases on the fad5 mutant phenotype.</title>
        <authorList>
            <person name="Heilmann I."/>
            <person name="Mekhedov S."/>
            <person name="King B."/>
            <person name="Browse J."/>
            <person name="Shanklin J."/>
        </authorList>
    </citation>
    <scope>NUCLEOTIDE SEQUENCE [MRNA]</scope>
    <scope>FUNCTION</scope>
    <scope>CATALYTIC ACTIVITY</scope>
    <scope>TISSUE SPECIFICITY</scope>
    <scope>PATHWAY</scope>
</reference>
<reference key="2">
    <citation type="submission" date="2003-07" db="EMBL/GenBank/DDBJ databases">
        <title>FAD5 gene encoding Arabidopsis monogalactosyldiacylglycerol-specific palmitic acid desaturase.</title>
        <authorList>
            <person name="Hamada T."/>
        </authorList>
    </citation>
    <scope>NUCLEOTIDE SEQUENCE [MRNA]</scope>
    <source>
        <tissue>Leaf</tissue>
    </source>
</reference>
<reference key="3">
    <citation type="journal article" date="2000" name="DNA Res.">
        <title>Structural analysis of Arabidopsis thaliana chromosome 3. I. Sequence features of the regions of 4,504,864 bp covered by sixty P1 and TAC clones.</title>
        <authorList>
            <person name="Sato S."/>
            <person name="Nakamura Y."/>
            <person name="Kaneko T."/>
            <person name="Katoh T."/>
            <person name="Asamizu E."/>
            <person name="Tabata S."/>
        </authorList>
    </citation>
    <scope>NUCLEOTIDE SEQUENCE [LARGE SCALE GENOMIC DNA]</scope>
    <source>
        <strain>cv. Columbia</strain>
    </source>
</reference>
<reference key="4">
    <citation type="journal article" date="2017" name="Plant J.">
        <title>Araport11: a complete reannotation of the Arabidopsis thaliana reference genome.</title>
        <authorList>
            <person name="Cheng C.Y."/>
            <person name="Krishnakumar V."/>
            <person name="Chan A.P."/>
            <person name="Thibaud-Nissen F."/>
            <person name="Schobel S."/>
            <person name="Town C.D."/>
        </authorList>
    </citation>
    <scope>GENOME REANNOTATION</scope>
    <source>
        <strain>cv. Columbia</strain>
    </source>
</reference>
<reference key="5">
    <citation type="journal article" date="2003" name="Science">
        <title>Empirical analysis of transcriptional activity in the Arabidopsis genome.</title>
        <authorList>
            <person name="Yamada K."/>
            <person name="Lim J."/>
            <person name="Dale J.M."/>
            <person name="Chen H."/>
            <person name="Shinn P."/>
            <person name="Palm C.J."/>
            <person name="Southwick A.M."/>
            <person name="Wu H.C."/>
            <person name="Kim C.J."/>
            <person name="Nguyen M."/>
            <person name="Pham P.K."/>
            <person name="Cheuk R.F."/>
            <person name="Karlin-Newmann G."/>
            <person name="Liu S.X."/>
            <person name="Lam B."/>
            <person name="Sakano H."/>
            <person name="Wu T."/>
            <person name="Yu G."/>
            <person name="Miranda M."/>
            <person name="Quach H.L."/>
            <person name="Tripp M."/>
            <person name="Chang C.H."/>
            <person name="Lee J.M."/>
            <person name="Toriumi M.J."/>
            <person name="Chan M.M."/>
            <person name="Tang C.C."/>
            <person name="Onodera C.S."/>
            <person name="Deng J.M."/>
            <person name="Akiyama K."/>
            <person name="Ansari Y."/>
            <person name="Arakawa T."/>
            <person name="Banh J."/>
            <person name="Banno F."/>
            <person name="Bowser L."/>
            <person name="Brooks S.Y."/>
            <person name="Carninci P."/>
            <person name="Chao Q."/>
            <person name="Choy N."/>
            <person name="Enju A."/>
            <person name="Goldsmith A.D."/>
            <person name="Gurjal M."/>
            <person name="Hansen N.F."/>
            <person name="Hayashizaki Y."/>
            <person name="Johnson-Hopson C."/>
            <person name="Hsuan V.W."/>
            <person name="Iida K."/>
            <person name="Karnes M."/>
            <person name="Khan S."/>
            <person name="Koesema E."/>
            <person name="Ishida J."/>
            <person name="Jiang P.X."/>
            <person name="Jones T."/>
            <person name="Kawai J."/>
            <person name="Kamiya A."/>
            <person name="Meyers C."/>
            <person name="Nakajima M."/>
            <person name="Narusaka M."/>
            <person name="Seki M."/>
            <person name="Sakurai T."/>
            <person name="Satou M."/>
            <person name="Tamse R."/>
            <person name="Vaysberg M."/>
            <person name="Wallender E.K."/>
            <person name="Wong C."/>
            <person name="Yamamura Y."/>
            <person name="Yuan S."/>
            <person name="Shinozaki K."/>
            <person name="Davis R.W."/>
            <person name="Theologis A."/>
            <person name="Ecker J.R."/>
        </authorList>
    </citation>
    <scope>NUCLEOTIDE SEQUENCE [LARGE SCALE MRNA]</scope>
    <source>
        <strain>cv. Columbia</strain>
    </source>
</reference>
<reference key="6">
    <citation type="submission" date="2002-03" db="EMBL/GenBank/DDBJ databases">
        <title>Full-length cDNA from Arabidopsis thaliana.</title>
        <authorList>
            <person name="Brover V.V."/>
            <person name="Troukhan M.E."/>
            <person name="Alexandrov N.A."/>
            <person name="Lu Y.-P."/>
            <person name="Flavell R.B."/>
            <person name="Feldmann K.A."/>
        </authorList>
    </citation>
    <scope>NUCLEOTIDE SEQUENCE [LARGE SCALE MRNA]</scope>
</reference>
<reference key="7">
    <citation type="journal article" date="1989" name="Plant Physiol.">
        <title>A mutant of Arabidopsis deficient in desaturation of palmitic Acid in leaf lipids.</title>
        <authorList>
            <person name="Kunst L."/>
            <person name="Browse J."/>
            <person name="Somerville C."/>
        </authorList>
    </citation>
    <scope>FUNCTION</scope>
</reference>
<reference key="8">
    <citation type="journal article" date="1992" name="Plant Physiol.">
        <title>A role for membrane lipid polyunsaturation in chloroplast biogenesis at low temperature.</title>
        <authorList>
            <person name="Hugly S."/>
            <person name="Somerville C."/>
        </authorList>
    </citation>
    <scope>FUNCTION</scope>
</reference>
<reference key="9">
    <citation type="journal article" date="2004" name="Proc. Natl. Acad. Sci. U.S.A.">
        <title>Switching desaturase enzyme specificity by alternate subcellular targeting.</title>
        <authorList>
            <person name="Heilmann I."/>
            <person name="Pidkowich M.S."/>
            <person name="Girke T."/>
            <person name="Shanklin J."/>
        </authorList>
    </citation>
    <scope>FUNCTION</scope>
    <scope>SPECIFICITY</scope>
</reference>
<name>ADS3_ARATH</name>
<accession>Q949X0</accession>
<accession>Q8LCQ8</accession>
<accession>Q9LVZ4</accession>
<dbReference type="EC" id="1.14.19.42" evidence="4"/>
<dbReference type="EMBL" id="AY734684">
    <property type="protein sequence ID" value="AAW51920.1"/>
    <property type="molecule type" value="Genomic_DNA"/>
</dbReference>
<dbReference type="EMBL" id="AB113831">
    <property type="protein sequence ID" value="BAD23903.1"/>
    <property type="molecule type" value="mRNA"/>
</dbReference>
<dbReference type="EMBL" id="AB017071">
    <property type="protein sequence ID" value="BAB02316.1"/>
    <property type="molecule type" value="Genomic_DNA"/>
</dbReference>
<dbReference type="EMBL" id="CP002686">
    <property type="protein sequence ID" value="AEE75737.1"/>
    <property type="molecule type" value="Genomic_DNA"/>
</dbReference>
<dbReference type="EMBL" id="AY050838">
    <property type="protein sequence ID" value="AAK92773.1"/>
    <property type="molecule type" value="mRNA"/>
</dbReference>
<dbReference type="EMBL" id="BT000957">
    <property type="protein sequence ID" value="AAN41357.1"/>
    <property type="molecule type" value="mRNA"/>
</dbReference>
<dbReference type="EMBL" id="AY086456">
    <property type="protein sequence ID" value="AAM63459.1"/>
    <property type="molecule type" value="mRNA"/>
</dbReference>
<dbReference type="RefSeq" id="NP_566529.1">
    <property type="nucleotide sequence ID" value="NM_112455.4"/>
</dbReference>
<dbReference type="SMR" id="Q949X0"/>
<dbReference type="FunCoup" id="Q949X0">
    <property type="interactions" value="769"/>
</dbReference>
<dbReference type="STRING" id="3702.Q949X0"/>
<dbReference type="PaxDb" id="3702-AT3G15850.1"/>
<dbReference type="ProteomicsDB" id="244653"/>
<dbReference type="EnsemblPlants" id="AT3G15850.1">
    <property type="protein sequence ID" value="AT3G15850.1"/>
    <property type="gene ID" value="AT3G15850"/>
</dbReference>
<dbReference type="GeneID" id="820828"/>
<dbReference type="Gramene" id="AT3G15850.1">
    <property type="protein sequence ID" value="AT3G15850.1"/>
    <property type="gene ID" value="AT3G15850"/>
</dbReference>
<dbReference type="KEGG" id="ath:AT3G15850"/>
<dbReference type="Araport" id="AT3G15850"/>
<dbReference type="TAIR" id="AT3G15850">
    <property type="gene designation" value="FAD5"/>
</dbReference>
<dbReference type="eggNOG" id="KOG1600">
    <property type="taxonomic scope" value="Eukaryota"/>
</dbReference>
<dbReference type="HOGENOM" id="CLU_027359_1_0_1"/>
<dbReference type="InParanoid" id="Q949X0"/>
<dbReference type="OMA" id="SCGESWH"/>
<dbReference type="OrthoDB" id="10260134at2759"/>
<dbReference type="PhylomeDB" id="Q949X0"/>
<dbReference type="BioCyc" id="ARA:AT3G15850-MONOMER"/>
<dbReference type="BioCyc" id="MetaCyc:AT3G15850-MONOMER"/>
<dbReference type="BRENDA" id="1.14.19.42">
    <property type="organism ID" value="399"/>
</dbReference>
<dbReference type="UniPathway" id="UPA00382"/>
<dbReference type="UniPathway" id="UPA00658"/>
<dbReference type="PRO" id="PR:Q949X0"/>
<dbReference type="Proteomes" id="UP000006548">
    <property type="component" value="Chromosome 3"/>
</dbReference>
<dbReference type="ExpressionAtlas" id="Q949X0">
    <property type="expression patterns" value="baseline and differential"/>
</dbReference>
<dbReference type="GO" id="GO:0031969">
    <property type="term" value="C:chloroplast membrane"/>
    <property type="evidence" value="ECO:0007669"/>
    <property type="project" value="UniProtKB-SubCell"/>
</dbReference>
<dbReference type="GO" id="GO:0009579">
    <property type="term" value="C:thylakoid"/>
    <property type="evidence" value="ECO:0000304"/>
    <property type="project" value="TAIR"/>
</dbReference>
<dbReference type="GO" id="GO:0102843">
    <property type="term" value="F:palmitoyl-[glycerolipid] 7-desaturase activity"/>
    <property type="evidence" value="ECO:0007669"/>
    <property type="project" value="UniProtKB-EC"/>
</dbReference>
<dbReference type="GO" id="GO:0031408">
    <property type="term" value="P:oxylipin biosynthetic process"/>
    <property type="evidence" value="ECO:0007669"/>
    <property type="project" value="UniProtKB-UniPathway"/>
</dbReference>
<dbReference type="GO" id="GO:0010205">
    <property type="term" value="P:photoinhibition"/>
    <property type="evidence" value="ECO:0000315"/>
    <property type="project" value="TAIR"/>
</dbReference>
<dbReference type="GO" id="GO:0006636">
    <property type="term" value="P:unsaturated fatty acid biosynthetic process"/>
    <property type="evidence" value="ECO:0000315"/>
    <property type="project" value="TAIR"/>
</dbReference>
<dbReference type="CDD" id="cd03505">
    <property type="entry name" value="Delta9-FADS-like"/>
    <property type="match status" value="1"/>
</dbReference>
<dbReference type="InterPro" id="IPR015876">
    <property type="entry name" value="Acyl-CoA_DS"/>
</dbReference>
<dbReference type="InterPro" id="IPR005804">
    <property type="entry name" value="FA_desaturase_dom"/>
</dbReference>
<dbReference type="PANTHER" id="PTHR11351">
    <property type="entry name" value="ACYL-COA DESATURASE"/>
    <property type="match status" value="1"/>
</dbReference>
<dbReference type="PANTHER" id="PTHR11351:SF31">
    <property type="entry name" value="DESATURASE 1, ISOFORM A-RELATED"/>
    <property type="match status" value="1"/>
</dbReference>
<dbReference type="Pfam" id="PF00487">
    <property type="entry name" value="FA_desaturase"/>
    <property type="match status" value="1"/>
</dbReference>
<dbReference type="PRINTS" id="PR00075">
    <property type="entry name" value="FACDDSATRASE"/>
</dbReference>